<feature type="chain" id="PRO_1000045434" description="High frequency lysogenization protein HflD homolog">
    <location>
        <begin position="1"/>
        <end position="212"/>
    </location>
</feature>
<name>HFLD_STUS1</name>
<proteinExistence type="inferred from homology"/>
<gene>
    <name evidence="1" type="primary">hflD</name>
    <name type="ordered locus">PST_2305</name>
</gene>
<comment type="subcellular location">
    <subcellularLocation>
        <location>Cytoplasm</location>
    </subcellularLocation>
    <subcellularLocation>
        <location evidence="1">Cell inner membrane</location>
        <topology evidence="1">Peripheral membrane protein</topology>
        <orientation evidence="1">Cytoplasmic side</orientation>
    </subcellularLocation>
</comment>
<comment type="similarity">
    <text evidence="1">Belongs to the HflD family.</text>
</comment>
<organism>
    <name type="scientific">Stutzerimonas stutzeri (strain A1501)</name>
    <name type="common">Pseudomonas stutzeri</name>
    <dbReference type="NCBI Taxonomy" id="379731"/>
    <lineage>
        <taxon>Bacteria</taxon>
        <taxon>Pseudomonadati</taxon>
        <taxon>Pseudomonadota</taxon>
        <taxon>Gammaproteobacteria</taxon>
        <taxon>Pseudomonadales</taxon>
        <taxon>Pseudomonadaceae</taxon>
        <taxon>Stutzerimonas</taxon>
    </lineage>
</organism>
<accession>A4VLW3</accession>
<sequence>MSKLDEQLIALGAVFEAATLVDRIARTGQVPNAALGCMLGSLLARNPQTTLEIYGGDDLNLRDGYRALVGALERDSSSLQREPLRYALAMIGLERQLDKRGDMLQVIGSRLDQIQQQVEHFGLTHENVVASFGGLYQDTLSTFRQRIQVQGDMRHLQQSDNAAKIRALLLSGIRSARLWRQLGGHRWQLIFSRRKLLDALYPRLRSTQSEDR</sequence>
<dbReference type="EMBL" id="CP000304">
    <property type="protein sequence ID" value="ABP79964.1"/>
    <property type="molecule type" value="Genomic_DNA"/>
</dbReference>
<dbReference type="RefSeq" id="WP_011913430.1">
    <property type="nucleotide sequence ID" value="NC_009434.1"/>
</dbReference>
<dbReference type="SMR" id="A4VLW3"/>
<dbReference type="GeneID" id="66821217"/>
<dbReference type="KEGG" id="psa:PST_2305"/>
<dbReference type="eggNOG" id="COG2915">
    <property type="taxonomic scope" value="Bacteria"/>
</dbReference>
<dbReference type="HOGENOM" id="CLU_098920_0_0_6"/>
<dbReference type="Proteomes" id="UP000000233">
    <property type="component" value="Chromosome"/>
</dbReference>
<dbReference type="GO" id="GO:0005737">
    <property type="term" value="C:cytoplasm"/>
    <property type="evidence" value="ECO:0007669"/>
    <property type="project" value="UniProtKB-SubCell"/>
</dbReference>
<dbReference type="GO" id="GO:0005886">
    <property type="term" value="C:plasma membrane"/>
    <property type="evidence" value="ECO:0007669"/>
    <property type="project" value="UniProtKB-SubCell"/>
</dbReference>
<dbReference type="Gene3D" id="1.10.3890.10">
    <property type="entry name" value="HflD-like"/>
    <property type="match status" value="1"/>
</dbReference>
<dbReference type="HAMAP" id="MF_00695">
    <property type="entry name" value="HflD_protein"/>
    <property type="match status" value="1"/>
</dbReference>
<dbReference type="InterPro" id="IPR007451">
    <property type="entry name" value="HflD"/>
</dbReference>
<dbReference type="InterPro" id="IPR035932">
    <property type="entry name" value="HflD-like_sf"/>
</dbReference>
<dbReference type="NCBIfam" id="NF001246">
    <property type="entry name" value="PRK00218.1-2"/>
    <property type="match status" value="1"/>
</dbReference>
<dbReference type="NCBIfam" id="NF001247">
    <property type="entry name" value="PRK00218.1-3"/>
    <property type="match status" value="1"/>
</dbReference>
<dbReference type="PANTHER" id="PTHR38100">
    <property type="entry name" value="HIGH FREQUENCY LYSOGENIZATION PROTEIN HFLD"/>
    <property type="match status" value="1"/>
</dbReference>
<dbReference type="PANTHER" id="PTHR38100:SF1">
    <property type="entry name" value="HIGH FREQUENCY LYSOGENIZATION PROTEIN HFLD"/>
    <property type="match status" value="1"/>
</dbReference>
<dbReference type="Pfam" id="PF04356">
    <property type="entry name" value="DUF489"/>
    <property type="match status" value="1"/>
</dbReference>
<dbReference type="SUPFAM" id="SSF101322">
    <property type="entry name" value="YcfC-like"/>
    <property type="match status" value="1"/>
</dbReference>
<protein>
    <recommendedName>
        <fullName evidence="1">High frequency lysogenization protein HflD homolog</fullName>
    </recommendedName>
</protein>
<evidence type="ECO:0000255" key="1">
    <source>
        <dbReference type="HAMAP-Rule" id="MF_00695"/>
    </source>
</evidence>
<reference key="1">
    <citation type="journal article" date="2008" name="Proc. Natl. Acad. Sci. U.S.A.">
        <title>Nitrogen fixation island and rhizosphere competence traits in the genome of root-associated Pseudomonas stutzeri A1501.</title>
        <authorList>
            <person name="Yan Y."/>
            <person name="Yang J."/>
            <person name="Dou Y."/>
            <person name="Chen M."/>
            <person name="Ping S."/>
            <person name="Peng J."/>
            <person name="Lu W."/>
            <person name="Zhang W."/>
            <person name="Yao Z."/>
            <person name="Li H."/>
            <person name="Liu W."/>
            <person name="He S."/>
            <person name="Geng L."/>
            <person name="Zhang X."/>
            <person name="Yang F."/>
            <person name="Yu H."/>
            <person name="Zhan Y."/>
            <person name="Li D."/>
            <person name="Lin Z."/>
            <person name="Wang Y."/>
            <person name="Elmerich C."/>
            <person name="Lin M."/>
            <person name="Jin Q."/>
        </authorList>
    </citation>
    <scope>NUCLEOTIDE SEQUENCE [LARGE SCALE GENOMIC DNA]</scope>
    <source>
        <strain>A1501</strain>
    </source>
</reference>
<keyword id="KW-0997">Cell inner membrane</keyword>
<keyword id="KW-1003">Cell membrane</keyword>
<keyword id="KW-0963">Cytoplasm</keyword>
<keyword id="KW-0472">Membrane</keyword>
<keyword id="KW-1185">Reference proteome</keyword>